<keyword id="KW-0002">3D-structure</keyword>
<keyword id="KW-0249">Electron transport</keyword>
<keyword id="KW-0472">Membrane</keyword>
<keyword id="KW-0496">Mitochondrion</keyword>
<keyword id="KW-0520">NAD</keyword>
<keyword id="KW-1185">Reference proteome</keyword>
<keyword id="KW-0679">Respiratory chain</keyword>
<keyword id="KW-1278">Translocase</keyword>
<keyword id="KW-0812">Transmembrane</keyword>
<keyword id="KW-1133">Transmembrane helix</keyword>
<keyword id="KW-0813">Transport</keyword>
<keyword id="KW-0830">Ubiquinone</keyword>
<dbReference type="EC" id="7.1.1.2"/>
<dbReference type="EMBL" id="AJ307410">
    <property type="protein sequence ID" value="CAC28088.2"/>
    <property type="molecule type" value="Genomic_DNA"/>
</dbReference>
<dbReference type="RefSeq" id="NP_075423.2">
    <property type="nucleotide sequence ID" value="NC_002659.1"/>
</dbReference>
<dbReference type="PDB" id="4WZ7">
    <property type="method" value="X-ray"/>
    <property type="resolution" value="3.60 A"/>
    <property type="chains" value="6=1-185"/>
</dbReference>
<dbReference type="PDB" id="6GCS">
    <property type="method" value="EM"/>
    <property type="resolution" value="4.32 A"/>
    <property type="chains" value="6=1-185"/>
</dbReference>
<dbReference type="PDB" id="6H8K">
    <property type="method" value="X-ray"/>
    <property type="resolution" value="3.79 A"/>
    <property type="chains" value="6=11-185"/>
</dbReference>
<dbReference type="PDB" id="6RFQ">
    <property type="method" value="EM"/>
    <property type="resolution" value="3.30 A"/>
    <property type="chains" value="6=1-185"/>
</dbReference>
<dbReference type="PDB" id="6RFR">
    <property type="method" value="EM"/>
    <property type="resolution" value="3.20 A"/>
    <property type="chains" value="6=1-185"/>
</dbReference>
<dbReference type="PDB" id="6RFS">
    <property type="method" value="EM"/>
    <property type="resolution" value="4.04 A"/>
    <property type="chains" value="6=1-185"/>
</dbReference>
<dbReference type="PDB" id="6Y79">
    <property type="method" value="EM"/>
    <property type="resolution" value="3.20 A"/>
    <property type="chains" value="6=1-185"/>
</dbReference>
<dbReference type="PDB" id="6YJ4">
    <property type="method" value="EM"/>
    <property type="resolution" value="2.70 A"/>
    <property type="chains" value="J=1-185"/>
</dbReference>
<dbReference type="PDB" id="7O6Y">
    <property type="method" value="EM"/>
    <property type="resolution" value="3.40 A"/>
    <property type="chains" value="6=2-185"/>
</dbReference>
<dbReference type="PDB" id="7O71">
    <property type="method" value="EM"/>
    <property type="resolution" value="2.40 A"/>
    <property type="chains" value="6=2-185"/>
</dbReference>
<dbReference type="PDB" id="7ZKP">
    <property type="method" value="EM"/>
    <property type="resolution" value="3.20 A"/>
    <property type="chains" value="6=2-185"/>
</dbReference>
<dbReference type="PDBsum" id="4WZ7"/>
<dbReference type="PDBsum" id="6GCS"/>
<dbReference type="PDBsum" id="6H8K"/>
<dbReference type="PDBsum" id="6RFQ"/>
<dbReference type="PDBsum" id="6RFR"/>
<dbReference type="PDBsum" id="6RFS"/>
<dbReference type="PDBsum" id="6Y79"/>
<dbReference type="PDBsum" id="6YJ4"/>
<dbReference type="PDBsum" id="7O6Y"/>
<dbReference type="PDBsum" id="7O71"/>
<dbReference type="PDBsum" id="7ZKP"/>
<dbReference type="EMDB" id="EMD-10711"/>
<dbReference type="EMDB" id="EMD-10815"/>
<dbReference type="EMDB" id="EMD-12741"/>
<dbReference type="EMDB" id="EMD-12742"/>
<dbReference type="EMDB" id="EMD-4384"/>
<dbReference type="EMDB" id="EMD-4872"/>
<dbReference type="EMDB" id="EMD-4873"/>
<dbReference type="EMDB" id="EMD-4874"/>
<dbReference type="SMR" id="Q9B6E9"/>
<dbReference type="DIP" id="DIP-61442N"/>
<dbReference type="IntAct" id="Q9B6E9">
    <property type="interactions" value="2"/>
</dbReference>
<dbReference type="STRING" id="284591.Q9B6E9"/>
<dbReference type="GeneID" id="802611"/>
<dbReference type="KEGG" id="yli:802611"/>
<dbReference type="InParanoid" id="Q9B6E9"/>
<dbReference type="Proteomes" id="UP000001300">
    <property type="component" value="Mitochondrion"/>
</dbReference>
<dbReference type="GO" id="GO:0031966">
    <property type="term" value="C:mitochondrial membrane"/>
    <property type="evidence" value="ECO:0007669"/>
    <property type="project" value="UniProtKB-SubCell"/>
</dbReference>
<dbReference type="GO" id="GO:0008137">
    <property type="term" value="F:NADH dehydrogenase (ubiquinone) activity"/>
    <property type="evidence" value="ECO:0007669"/>
    <property type="project" value="UniProtKB-EC"/>
</dbReference>
<dbReference type="Gene3D" id="1.20.120.1200">
    <property type="entry name" value="NADH-ubiquinone/plastoquinone oxidoreductase chain 6, subunit NuoJ"/>
    <property type="match status" value="1"/>
</dbReference>
<dbReference type="InterPro" id="IPR001457">
    <property type="entry name" value="NADH_UbQ/plastoQ_OxRdtase_su6"/>
</dbReference>
<dbReference type="InterPro" id="IPR042106">
    <property type="entry name" value="Nuo/plastoQ_OxRdtase_6_NuoJ"/>
</dbReference>
<dbReference type="PANTHER" id="PTHR33269">
    <property type="entry name" value="NADH-UBIQUINONE OXIDOREDUCTASE CHAIN 6"/>
    <property type="match status" value="1"/>
</dbReference>
<dbReference type="PANTHER" id="PTHR33269:SF17">
    <property type="entry name" value="NADH-UBIQUINONE OXIDOREDUCTASE CHAIN 6"/>
    <property type="match status" value="1"/>
</dbReference>
<dbReference type="Pfam" id="PF00499">
    <property type="entry name" value="Oxidored_q3"/>
    <property type="match status" value="1"/>
</dbReference>
<feature type="chain" id="PRO_0000118349" description="NADH-ubiquinone oxidoreductase chain 6">
    <location>
        <begin position="1"/>
        <end position="185"/>
    </location>
</feature>
<feature type="transmembrane region" description="Helical" evidence="1">
    <location>
        <begin position="4"/>
        <end position="24"/>
    </location>
</feature>
<feature type="transmembrane region" description="Helical" evidence="1">
    <location>
        <begin position="33"/>
        <end position="53"/>
    </location>
</feature>
<feature type="transmembrane region" description="Helical" evidence="1">
    <location>
        <begin position="54"/>
        <end position="74"/>
    </location>
</feature>
<feature type="transmembrane region" description="Helical" evidence="1">
    <location>
        <begin position="94"/>
        <end position="114"/>
    </location>
</feature>
<feature type="transmembrane region" description="Helical" evidence="1">
    <location>
        <begin position="159"/>
        <end position="179"/>
    </location>
</feature>
<feature type="helix" evidence="4">
    <location>
        <begin position="2"/>
        <end position="6"/>
    </location>
</feature>
<feature type="helix" evidence="4">
    <location>
        <begin position="8"/>
        <end position="25"/>
    </location>
</feature>
<feature type="helix" evidence="4">
    <location>
        <begin position="29"/>
        <end position="49"/>
    </location>
</feature>
<feature type="helix" evidence="4">
    <location>
        <begin position="53"/>
        <end position="62"/>
    </location>
</feature>
<feature type="turn" evidence="4">
    <location>
        <begin position="63"/>
        <end position="66"/>
    </location>
</feature>
<feature type="helix" evidence="4">
    <location>
        <begin position="67"/>
        <end position="77"/>
    </location>
</feature>
<feature type="helix" evidence="4">
    <location>
        <begin position="87"/>
        <end position="90"/>
    </location>
</feature>
<feature type="helix" evidence="4">
    <location>
        <begin position="91"/>
        <end position="93"/>
    </location>
</feature>
<feature type="helix" evidence="4">
    <location>
        <begin position="94"/>
        <end position="110"/>
    </location>
</feature>
<feature type="helix" evidence="5">
    <location>
        <begin position="112"/>
        <end position="117"/>
    </location>
</feature>
<feature type="helix" evidence="4">
    <location>
        <begin position="118"/>
        <end position="125"/>
    </location>
</feature>
<feature type="strand" evidence="4">
    <location>
        <begin position="130"/>
        <end position="134"/>
    </location>
</feature>
<feature type="helix" evidence="4">
    <location>
        <begin position="146"/>
        <end position="155"/>
    </location>
</feature>
<feature type="turn" evidence="4">
    <location>
        <begin position="156"/>
        <end position="158"/>
    </location>
</feature>
<feature type="helix" evidence="4">
    <location>
        <begin position="159"/>
        <end position="180"/>
    </location>
</feature>
<geneLocation type="mitochondrion"/>
<name>NU6M_YARLI</name>
<proteinExistence type="evidence at protein level"/>
<protein>
    <recommendedName>
        <fullName>NADH-ubiquinone oxidoreductase chain 6</fullName>
        <ecNumber>7.1.1.2</ecNumber>
    </recommendedName>
    <alternativeName>
        <fullName>NADH dehydrogenase subunit 6</fullName>
    </alternativeName>
</protein>
<organism>
    <name type="scientific">Yarrowia lipolytica (strain CLIB 122 / E 150)</name>
    <name type="common">Yeast</name>
    <name type="synonym">Candida lipolytica</name>
    <dbReference type="NCBI Taxonomy" id="284591"/>
    <lineage>
        <taxon>Eukaryota</taxon>
        <taxon>Fungi</taxon>
        <taxon>Dikarya</taxon>
        <taxon>Ascomycota</taxon>
        <taxon>Saccharomycotina</taxon>
        <taxon>Dipodascomycetes</taxon>
        <taxon>Dipodascales</taxon>
        <taxon>Dipodascales incertae sedis</taxon>
        <taxon>Yarrowia</taxon>
    </lineage>
</organism>
<evidence type="ECO:0000255" key="1"/>
<evidence type="ECO:0000269" key="2">
    <source>
    </source>
</evidence>
<evidence type="ECO:0000305" key="3"/>
<evidence type="ECO:0007829" key="4">
    <source>
        <dbReference type="PDB" id="7O71"/>
    </source>
</evidence>
<evidence type="ECO:0007829" key="5">
    <source>
        <dbReference type="PDB" id="7ZKP"/>
    </source>
</evidence>
<comment type="function">
    <text>Core subunit of the mitochondrial membrane respiratory chain NADH dehydrogenase (Complex I) that is believed to belong to the minimal assembly required for catalysis. Complex I functions in the transfer of electrons from NADH to the respiratory chain. The immediate electron acceptor for the enzyme is believed to be ubiquinone.</text>
</comment>
<comment type="catalytic activity">
    <reaction>
        <text>a ubiquinone + NADH + 5 H(+)(in) = a ubiquinol + NAD(+) + 4 H(+)(out)</text>
        <dbReference type="Rhea" id="RHEA:29091"/>
        <dbReference type="Rhea" id="RHEA-COMP:9565"/>
        <dbReference type="Rhea" id="RHEA-COMP:9566"/>
        <dbReference type="ChEBI" id="CHEBI:15378"/>
        <dbReference type="ChEBI" id="CHEBI:16389"/>
        <dbReference type="ChEBI" id="CHEBI:17976"/>
        <dbReference type="ChEBI" id="CHEBI:57540"/>
        <dbReference type="ChEBI" id="CHEBI:57945"/>
        <dbReference type="EC" id="7.1.1.2"/>
    </reaction>
</comment>
<comment type="subunit">
    <text evidence="2">Complex I is composed of 37 different subunits.</text>
</comment>
<comment type="subcellular location">
    <subcellularLocation>
        <location evidence="3">Mitochondrion membrane</location>
        <topology evidence="3">Multi-pass membrane protein</topology>
    </subcellularLocation>
</comment>
<comment type="similarity">
    <text evidence="3">Belongs to the complex I subunit 6 family.</text>
</comment>
<sequence>MMYLTYYFIEITIFLAILCTIFIISAKNPMVSILYMIALFVIAAMYLYLIGLGIFSLLYIMIYIGAIAVLFLFIITLLDINSTELSVKSNIRDLPLVLISLIVLTISGLMIYSNDSILINKLLEAFGNDYNTIITQDWFNIENTTLLTTIGNVLLTNNAFILLVLAIVLLLGIIGPISITMKHKE</sequence>
<gene>
    <name type="primary">ND6</name>
</gene>
<accession>Q9B6E9</accession>
<reference key="1">
    <citation type="journal article" date="2001" name="Comp. Funct. Genomics">
        <title>The complete mitochondrial genome of Yarrowia lipolytica.</title>
        <authorList>
            <person name="Kerscher S."/>
            <person name="Durstewitz G."/>
            <person name="Casaregola S."/>
            <person name="Gaillardin C."/>
            <person name="Brandt U."/>
        </authorList>
    </citation>
    <scope>NUCLEOTIDE SEQUENCE [LARGE SCALE GENOMIC DNA]</scope>
    <source>
        <strain>ATCC 20460 / W29 / CBS 7504 / IFP29</strain>
    </source>
</reference>
<reference key="2">
    <citation type="journal article" date="2004" name="Biochim. Biophys. Acta">
        <title>Subunit composition of mitochondrial complex I from the yeast Yarrowia lipolytica.</title>
        <authorList>
            <person name="Abdrakhmanova A."/>
            <person name="Zickermann V."/>
            <person name="Bostina M."/>
            <person name="Radermacher M."/>
            <person name="Schagger H."/>
            <person name="Kerscher S."/>
            <person name="Brandt U."/>
        </authorList>
    </citation>
    <scope>SUBUNIT</scope>
</reference>